<gene>
    <name evidence="4" type="primary">RXLR-C22</name>
</gene>
<keyword id="KW-0325">Glycoprotein</keyword>
<keyword id="KW-1040">Host Golgi apparatus</keyword>
<keyword id="KW-1185">Reference proteome</keyword>
<keyword id="KW-0964">Secreted</keyword>
<keyword id="KW-0732">Signal</keyword>
<keyword id="KW-0843">Virulence</keyword>
<proteinExistence type="evidence at transcript level"/>
<name>RLR24_PLAHL</name>
<accession>A0A0P1AK67</accession>
<protein>
    <recommendedName>
        <fullName evidence="4">Secreted RxLR effector protein RXLR-C22</fullName>
    </recommendedName>
</protein>
<dbReference type="EMBL" id="CCYD01000553">
    <property type="protein sequence ID" value="CEG41472.1"/>
    <property type="molecule type" value="Genomic_DNA"/>
</dbReference>
<dbReference type="SMR" id="A0A0P1AK67"/>
<dbReference type="GlyCosmos" id="A0A0P1AK67">
    <property type="glycosylation" value="1 site, No reported glycans"/>
</dbReference>
<dbReference type="EnsemblProtists" id="CEG41472">
    <property type="protein sequence ID" value="CEG41472"/>
    <property type="gene ID" value="CEG41472"/>
</dbReference>
<dbReference type="Proteomes" id="UP000054928">
    <property type="component" value="Unassembled WGS sequence"/>
</dbReference>
<dbReference type="GO" id="GO:0005576">
    <property type="term" value="C:extracellular region"/>
    <property type="evidence" value="ECO:0007669"/>
    <property type="project" value="UniProtKB-SubCell"/>
</dbReference>
<dbReference type="GO" id="GO:0044177">
    <property type="term" value="C:host cell Golgi apparatus"/>
    <property type="evidence" value="ECO:0007669"/>
    <property type="project" value="UniProtKB-SubCell"/>
</dbReference>
<evidence type="ECO:0000255" key="1"/>
<evidence type="ECO:0000255" key="2">
    <source>
        <dbReference type="PROSITE-ProRule" id="PRU00498"/>
    </source>
</evidence>
<evidence type="ECO:0000269" key="3">
    <source>
    </source>
</evidence>
<evidence type="ECO:0000303" key="4">
    <source>
    </source>
</evidence>
<evidence type="ECO:0000305" key="5"/>
<evidence type="ECO:0000305" key="6">
    <source>
    </source>
</evidence>
<comment type="function">
    <text evidence="3">Secreted effector that does not suppress pattern-triggered immunity (PTI) in plant host.</text>
</comment>
<comment type="subcellular location">
    <subcellularLocation>
        <location evidence="3">Secreted</location>
    </subcellularLocation>
    <subcellularLocation>
        <location evidence="3">Host Golgi apparatus</location>
    </subcellularLocation>
    <text evidence="3">Also localizes to host P-bodies.</text>
</comment>
<comment type="induction">
    <text evidence="3">Expression is up-regulated in spores.</text>
</comment>
<comment type="domain">
    <text evidence="6">The RxLR-dEER motif acts to carry the protein into the host cell cytoplasm through binding to cell surface phosphatidylinositol-3-phosphate.</text>
</comment>
<comment type="similarity">
    <text evidence="5">Belongs to the RxLR effector family.</text>
</comment>
<sequence length="132" mass="14894">MRSLVWAVIATLIVLTPFSEATSSIASNNEEFKQNVRVASSSLEQKGTIEDSVITRKLQSDSVKKGDSTGLEERGGLHVPTIHDNKIVQGFYKVMRYLRQKLGIDFLLTRLRYGKNGSHQPNMGYSRVDHYH</sequence>
<feature type="signal peptide" evidence="1">
    <location>
        <begin position="1"/>
        <end position="21"/>
    </location>
</feature>
<feature type="chain" id="PRO_5006058720" description="Secreted RxLR effector protein RXLR-C22">
    <location>
        <begin position="22"/>
        <end position="132"/>
    </location>
</feature>
<feature type="short sequence motif" description="RxLR-dEER" evidence="6">
    <location>
        <begin position="56"/>
        <end position="74"/>
    </location>
</feature>
<feature type="glycosylation site" description="N-linked (GlcNAc...) asparagine" evidence="2">
    <location>
        <position position="116"/>
    </location>
</feature>
<reference key="1">
    <citation type="journal article" date="2015" name="BMC Genomics">
        <title>Genome analyses of the sunflower pathogen Plasmopara halstedii provide insights into effector evolution in downy mildews and Phytophthora.</title>
        <authorList>
            <person name="Sharma R."/>
            <person name="Xia X."/>
            <person name="Cano L.M."/>
            <person name="Evangelisti E."/>
            <person name="Kemen E."/>
            <person name="Judelson H."/>
            <person name="Oome S."/>
            <person name="Sambles C."/>
            <person name="van den Hoogen D.J."/>
            <person name="Kitner M."/>
            <person name="Klein J."/>
            <person name="Meijer H.J."/>
            <person name="Spring O."/>
            <person name="Win J."/>
            <person name="Zipper R."/>
            <person name="Bode H.B."/>
            <person name="Govers F."/>
            <person name="Kamoun S."/>
            <person name="Schornack S."/>
            <person name="Studholme D.J."/>
            <person name="Van den Ackerveken G."/>
            <person name="Thines M."/>
        </authorList>
    </citation>
    <scope>NUCLEOTIDE SEQUENCE [LARGE SCALE GENOMIC DNA]</scope>
</reference>
<reference key="2">
    <citation type="journal article" date="2019" name="Plant J.">
        <title>Sunflower resistance to multiple downy mildew pathotypes revealed by recognition of conserved effectors of the oomycete Plasmopara halstedii.</title>
        <authorList>
            <person name="Pecrix Y."/>
            <person name="Buendia L."/>
            <person name="Penouilh-Suzette C."/>
            <person name="Marechaux M."/>
            <person name="Legrand L."/>
            <person name="Bouchez O."/>
            <person name="Rengel D."/>
            <person name="Gouzy J."/>
            <person name="Cottret L."/>
            <person name="Vear F."/>
            <person name="Godiard L."/>
        </authorList>
    </citation>
    <scope>DOMAIN</scope>
    <scope>INDUCTION</scope>
    <scope>FUNCTION</scope>
    <scope>SUBCELLULAR LOCATION</scope>
</reference>
<organism>
    <name type="scientific">Plasmopara halstedii</name>
    <name type="common">Downy mildew of sunflower</name>
    <dbReference type="NCBI Taxonomy" id="4781"/>
    <lineage>
        <taxon>Eukaryota</taxon>
        <taxon>Sar</taxon>
        <taxon>Stramenopiles</taxon>
        <taxon>Oomycota</taxon>
        <taxon>Peronosporales</taxon>
        <taxon>Peronosporaceae</taxon>
        <taxon>Plasmopara</taxon>
    </lineage>
</organism>